<protein>
    <recommendedName>
        <fullName>Cyclic AMP-dependent transcription factor ATF-6 beta</fullName>
        <shortName>cAMP-dependent transcription factor ATF-6 beta</shortName>
    </recommendedName>
    <alternativeName>
        <fullName>Activating transcription factor 6 beta</fullName>
        <shortName>ATF6-beta</shortName>
    </alternativeName>
    <alternativeName>
        <fullName>Protein G13</fullName>
    </alternativeName>
    <alternativeName>
        <fullName>cAMP response element-binding protein-related protein</fullName>
        <shortName>Creb-rp</shortName>
    </alternativeName>
    <alternativeName>
        <fullName>cAMP-responsive element-binding protein-like 1</fullName>
    </alternativeName>
    <component>
        <recommendedName>
            <fullName>Processed cyclic AMP-dependent transcription factor ATF-6 beta</fullName>
        </recommendedName>
    </component>
</protein>
<evidence type="ECO:0000250" key="1">
    <source>
        <dbReference type="UniProtKB" id="P18850"/>
    </source>
</evidence>
<evidence type="ECO:0000255" key="2"/>
<evidence type="ECO:0000255" key="3">
    <source>
        <dbReference type="PROSITE-ProRule" id="PRU00978"/>
    </source>
</evidence>
<evidence type="ECO:0000256" key="4">
    <source>
        <dbReference type="SAM" id="MobiDB-lite"/>
    </source>
</evidence>
<evidence type="ECO:0000269" key="5">
    <source>
    </source>
</evidence>
<evidence type="ECO:0000303" key="6">
    <source>
    </source>
</evidence>
<evidence type="ECO:0000305" key="7"/>
<evidence type="ECO:0000305" key="8">
    <source>
    </source>
</evidence>
<evidence type="ECO:0007744" key="9">
    <source>
    </source>
</evidence>
<evidence type="ECO:0007744" key="10">
    <source>
    </source>
</evidence>
<gene>
    <name type="primary">ATF6B</name>
    <name type="synonym">CREBL1</name>
    <name type="synonym">G13</name>
</gene>
<reference key="1">
    <citation type="journal article" date="1995" name="Genomics">
        <title>A novel Creb family gene telomeric of HLA-DRA in the HLA complex.</title>
        <authorList>
            <person name="Min J."/>
            <person name="Shukla H."/>
            <person name="Kozono H."/>
            <person name="Bronson S.K."/>
            <person name="Weissman S.M."/>
            <person name="Chaplin D.D."/>
        </authorList>
    </citation>
    <scope>NUCLEOTIDE SEQUENCE [MRNA] (ISOFORM 1)</scope>
    <source>
        <tissue>Tonsil</tissue>
    </source>
</reference>
<reference key="2">
    <citation type="journal article" date="1996" name="Biochem. J.">
        <title>The gene G13 in the class III region of the human MHC encodes a potential DNA-binding protein.</title>
        <authorList>
            <person name="Khanna A."/>
            <person name="Campbell R.D."/>
        </authorList>
    </citation>
    <scope>NUCLEOTIDE SEQUENCE [GENOMIC DNA / MRNA] (ISOFORM 2)</scope>
</reference>
<reference key="3">
    <citation type="journal article" date="2003" name="Genome Res.">
        <title>Analysis of the gene-dense major histocompatibility complex class III region and its comparison to mouse.</title>
        <authorList>
            <person name="Xie T."/>
            <person name="Rowen L."/>
            <person name="Aguado B."/>
            <person name="Ahearn M.E."/>
            <person name="Madan A."/>
            <person name="Qin S."/>
            <person name="Campbell R.D."/>
            <person name="Hood L."/>
        </authorList>
    </citation>
    <scope>NUCLEOTIDE SEQUENCE [LARGE SCALE GENOMIC DNA]</scope>
</reference>
<reference key="4">
    <citation type="journal article" date="2003" name="Nature">
        <title>The DNA sequence and analysis of human chromosome 6.</title>
        <authorList>
            <person name="Mungall A.J."/>
            <person name="Palmer S.A."/>
            <person name="Sims S.K."/>
            <person name="Edwards C.A."/>
            <person name="Ashurst J.L."/>
            <person name="Wilming L."/>
            <person name="Jones M.C."/>
            <person name="Horton R."/>
            <person name="Hunt S.E."/>
            <person name="Scott C.E."/>
            <person name="Gilbert J.G.R."/>
            <person name="Clamp M.E."/>
            <person name="Bethel G."/>
            <person name="Milne S."/>
            <person name="Ainscough R."/>
            <person name="Almeida J.P."/>
            <person name="Ambrose K.D."/>
            <person name="Andrews T.D."/>
            <person name="Ashwell R.I.S."/>
            <person name="Babbage A.K."/>
            <person name="Bagguley C.L."/>
            <person name="Bailey J."/>
            <person name="Banerjee R."/>
            <person name="Barker D.J."/>
            <person name="Barlow K.F."/>
            <person name="Bates K."/>
            <person name="Beare D.M."/>
            <person name="Beasley H."/>
            <person name="Beasley O."/>
            <person name="Bird C.P."/>
            <person name="Blakey S.E."/>
            <person name="Bray-Allen S."/>
            <person name="Brook J."/>
            <person name="Brown A.J."/>
            <person name="Brown J.Y."/>
            <person name="Burford D.C."/>
            <person name="Burrill W."/>
            <person name="Burton J."/>
            <person name="Carder C."/>
            <person name="Carter N.P."/>
            <person name="Chapman J.C."/>
            <person name="Clark S.Y."/>
            <person name="Clark G."/>
            <person name="Clee C.M."/>
            <person name="Clegg S."/>
            <person name="Cobley V."/>
            <person name="Collier R.E."/>
            <person name="Collins J.E."/>
            <person name="Colman L.K."/>
            <person name="Corby N.R."/>
            <person name="Coville G.J."/>
            <person name="Culley K.M."/>
            <person name="Dhami P."/>
            <person name="Davies J."/>
            <person name="Dunn M."/>
            <person name="Earthrowl M.E."/>
            <person name="Ellington A.E."/>
            <person name="Evans K.A."/>
            <person name="Faulkner L."/>
            <person name="Francis M.D."/>
            <person name="Frankish A."/>
            <person name="Frankland J."/>
            <person name="French L."/>
            <person name="Garner P."/>
            <person name="Garnett J."/>
            <person name="Ghori M.J."/>
            <person name="Gilby L.M."/>
            <person name="Gillson C.J."/>
            <person name="Glithero R.J."/>
            <person name="Grafham D.V."/>
            <person name="Grant M."/>
            <person name="Gribble S."/>
            <person name="Griffiths C."/>
            <person name="Griffiths M.N.D."/>
            <person name="Hall R."/>
            <person name="Halls K.S."/>
            <person name="Hammond S."/>
            <person name="Harley J.L."/>
            <person name="Hart E.A."/>
            <person name="Heath P.D."/>
            <person name="Heathcott R."/>
            <person name="Holmes S.J."/>
            <person name="Howden P.J."/>
            <person name="Howe K.L."/>
            <person name="Howell G.R."/>
            <person name="Huckle E."/>
            <person name="Humphray S.J."/>
            <person name="Humphries M.D."/>
            <person name="Hunt A.R."/>
            <person name="Johnson C.M."/>
            <person name="Joy A.A."/>
            <person name="Kay M."/>
            <person name="Keenan S.J."/>
            <person name="Kimberley A.M."/>
            <person name="King A."/>
            <person name="Laird G.K."/>
            <person name="Langford C."/>
            <person name="Lawlor S."/>
            <person name="Leongamornlert D.A."/>
            <person name="Leversha M."/>
            <person name="Lloyd C.R."/>
            <person name="Lloyd D.M."/>
            <person name="Loveland J.E."/>
            <person name="Lovell J."/>
            <person name="Martin S."/>
            <person name="Mashreghi-Mohammadi M."/>
            <person name="Maslen G.L."/>
            <person name="Matthews L."/>
            <person name="McCann O.T."/>
            <person name="McLaren S.J."/>
            <person name="McLay K."/>
            <person name="McMurray A."/>
            <person name="Moore M.J.F."/>
            <person name="Mullikin J.C."/>
            <person name="Niblett D."/>
            <person name="Nickerson T."/>
            <person name="Novik K.L."/>
            <person name="Oliver K."/>
            <person name="Overton-Larty E.K."/>
            <person name="Parker A."/>
            <person name="Patel R."/>
            <person name="Pearce A.V."/>
            <person name="Peck A.I."/>
            <person name="Phillimore B.J.C.T."/>
            <person name="Phillips S."/>
            <person name="Plumb R.W."/>
            <person name="Porter K.M."/>
            <person name="Ramsey Y."/>
            <person name="Ranby S.A."/>
            <person name="Rice C.M."/>
            <person name="Ross M.T."/>
            <person name="Searle S.M."/>
            <person name="Sehra H.K."/>
            <person name="Sheridan E."/>
            <person name="Skuce C.D."/>
            <person name="Smith S."/>
            <person name="Smith M."/>
            <person name="Spraggon L."/>
            <person name="Squares S.L."/>
            <person name="Steward C.A."/>
            <person name="Sycamore N."/>
            <person name="Tamlyn-Hall G."/>
            <person name="Tester J."/>
            <person name="Theaker A.J."/>
            <person name="Thomas D.W."/>
            <person name="Thorpe A."/>
            <person name="Tracey A."/>
            <person name="Tromans A."/>
            <person name="Tubby B."/>
            <person name="Wall M."/>
            <person name="Wallis J.M."/>
            <person name="West A.P."/>
            <person name="White S.S."/>
            <person name="Whitehead S.L."/>
            <person name="Whittaker H."/>
            <person name="Wild A."/>
            <person name="Willey D.J."/>
            <person name="Wilmer T.E."/>
            <person name="Wood J.M."/>
            <person name="Wray P.W."/>
            <person name="Wyatt J.C."/>
            <person name="Young L."/>
            <person name="Younger R.M."/>
            <person name="Bentley D.R."/>
            <person name="Coulson A."/>
            <person name="Durbin R.M."/>
            <person name="Hubbard T."/>
            <person name="Sulston J.E."/>
            <person name="Dunham I."/>
            <person name="Rogers J."/>
            <person name="Beck S."/>
        </authorList>
    </citation>
    <scope>NUCLEOTIDE SEQUENCE [LARGE SCALE GENOMIC DNA]</scope>
</reference>
<reference key="5">
    <citation type="submission" date="2005-07" db="EMBL/GenBank/DDBJ databases">
        <authorList>
            <person name="Mural R.J."/>
            <person name="Istrail S."/>
            <person name="Sutton G.G."/>
            <person name="Florea L."/>
            <person name="Halpern A.L."/>
            <person name="Mobarry C.M."/>
            <person name="Lippert R."/>
            <person name="Walenz B."/>
            <person name="Shatkay H."/>
            <person name="Dew I."/>
            <person name="Miller J.R."/>
            <person name="Flanigan M.J."/>
            <person name="Edwards N.J."/>
            <person name="Bolanos R."/>
            <person name="Fasulo D."/>
            <person name="Halldorsson B.V."/>
            <person name="Hannenhalli S."/>
            <person name="Turner R."/>
            <person name="Yooseph S."/>
            <person name="Lu F."/>
            <person name="Nusskern D.R."/>
            <person name="Shue B.C."/>
            <person name="Zheng X.H."/>
            <person name="Zhong F."/>
            <person name="Delcher A.L."/>
            <person name="Huson D.H."/>
            <person name="Kravitz S.A."/>
            <person name="Mouchard L."/>
            <person name="Reinert K."/>
            <person name="Remington K.A."/>
            <person name="Clark A.G."/>
            <person name="Waterman M.S."/>
            <person name="Eichler E.E."/>
            <person name="Adams M.D."/>
            <person name="Hunkapiller M.W."/>
            <person name="Myers E.W."/>
            <person name="Venter J.C."/>
        </authorList>
    </citation>
    <scope>NUCLEOTIDE SEQUENCE [LARGE SCALE GENOMIC DNA]</scope>
</reference>
<reference key="6">
    <citation type="journal article" date="1996" name="Hum. Mol. Genet.">
        <title>Alternate promoters and alternate splicing of human tenascin-X, a gene with 5' and 3' ends buried in other genes.</title>
        <authorList>
            <person name="Speek M."/>
            <person name="Barry F."/>
            <person name="Miller W.L."/>
        </authorList>
    </citation>
    <scope>PARTIAL NUCLEOTIDE SEQUENCE [MRNA] (ISOFORM 2)</scope>
</reference>
<reference key="7">
    <citation type="journal article" date="2001" name="Biochem. J.">
        <title>Identification of the G13 (cAMP-response-element-binding protein-related protein) gene product related to activating transcription factor 6 as a transcriptional activator of the mammalian unfolded protein response.</title>
        <authorList>
            <person name="Haze K."/>
            <person name="Okada T."/>
            <person name="Yoshida H."/>
            <person name="Yanagi H."/>
            <person name="Yura T."/>
            <person name="Negishi M."/>
            <person name="Mori K."/>
        </authorList>
    </citation>
    <scope>FUNCTION</scope>
    <scope>SUBCELLULAR LOCATION</scope>
    <scope>PROTEOLYTIC CLEAVAGE</scope>
</reference>
<reference key="8">
    <citation type="journal article" date="2012" name="Mol. Cell. Proteomics">
        <title>Comparative large-scale characterisation of plant vs. mammal proteins reveals similar and idiosyncratic N-alpha acetylation features.</title>
        <authorList>
            <person name="Bienvenut W.V."/>
            <person name="Sumpton D."/>
            <person name="Martinez A."/>
            <person name="Lilla S."/>
            <person name="Espagne C."/>
            <person name="Meinnel T."/>
            <person name="Giglione C."/>
        </authorList>
    </citation>
    <scope>ACETYLATION [LARGE SCALE ANALYSIS] AT ALA-2</scope>
    <scope>CLEAVAGE OF INITIATOR METHIONINE [LARGE SCALE ANALYSIS]</scope>
    <scope>IDENTIFICATION BY MASS SPECTROMETRY [LARGE SCALE ANALYSIS]</scope>
</reference>
<reference key="9">
    <citation type="journal article" date="2012" name="Proc. Natl. Acad. Sci. U.S.A.">
        <title>N-terminal acetylome analyses and functional insights of the N-terminal acetyltransferase NatB.</title>
        <authorList>
            <person name="Van Damme P."/>
            <person name="Lasa M."/>
            <person name="Polevoda B."/>
            <person name="Gazquez C."/>
            <person name="Elosegui-Artola A."/>
            <person name="Kim D.S."/>
            <person name="De Juan-Pardo E."/>
            <person name="Demeyer K."/>
            <person name="Hole K."/>
            <person name="Larrea E."/>
            <person name="Timmerman E."/>
            <person name="Prieto J."/>
            <person name="Arnesen T."/>
            <person name="Sherman F."/>
            <person name="Gevaert K."/>
            <person name="Aldabe R."/>
        </authorList>
    </citation>
    <scope>ACETYLATION [LARGE SCALE ANALYSIS] AT ALA-2</scope>
    <scope>CLEAVAGE OF INITIATOR METHIONINE [LARGE SCALE ANALYSIS]</scope>
    <scope>IDENTIFICATION BY MASS SPECTROMETRY [LARGE SCALE ANALYSIS]</scope>
</reference>
<proteinExistence type="evidence at protein level"/>
<keyword id="KW-0007">Acetylation</keyword>
<keyword id="KW-0010">Activator</keyword>
<keyword id="KW-0025">Alternative splicing</keyword>
<keyword id="KW-0238">DNA-binding</keyword>
<keyword id="KW-0256">Endoplasmic reticulum</keyword>
<keyword id="KW-0325">Glycoprotein</keyword>
<keyword id="KW-0472">Membrane</keyword>
<keyword id="KW-0539">Nucleus</keyword>
<keyword id="KW-1267">Proteomics identification</keyword>
<keyword id="KW-1185">Reference proteome</keyword>
<keyword id="KW-0735">Signal-anchor</keyword>
<keyword id="KW-0804">Transcription</keyword>
<keyword id="KW-0805">Transcription regulation</keyword>
<keyword id="KW-0812">Transmembrane</keyword>
<keyword id="KW-1133">Transmembrane helix</keyword>
<keyword id="KW-0834">Unfolded protein response</keyword>
<comment type="function">
    <molecule>Cyclic AMP-dependent transcription factor ATF-6 beta</molecule>
    <text evidence="5">Precursor of the transcription factor form (Processed cyclic AMP-dependent transcription factor ATF-6 beta), which is embedded in the endoplasmic reticulum membrane (PubMed:11256944). Endoplasmic reticulum stress promotes processing of this form, releasing the transcription factor form that translocates into the nucleus, where it activates transcription of genes involved in the unfolded protein response (UPR) (PubMed:11256944).</text>
</comment>
<comment type="function">
    <molecule>Processed cyclic AMP-dependent transcription factor ATF-6 beta</molecule>
    <text evidence="5">Transcription factor that acts in the unfolded protein response (UPR) pathway by activating UPR target genes induced during ER stress (PubMed:11256944). Binds DNA on the 5'-CCAC[GA]-3' half of the ER stress response element (ERSE) (5'-CCAATN(9)CCAC[GA]-3') when NF-Y is bound to ERSE (PubMed:11256944).</text>
</comment>
<comment type="subunit">
    <molecule>Processed cyclic AMP-dependent transcription factor ATF-6 beta</molecule>
    <text evidence="5">Homodimer and heterodimer with ATF6-alpha. The dimer interacts with the nuclear transcription factor Y (NF-Y) trimer through direct binding to NF-Y subunit C (NF-YC).</text>
</comment>
<comment type="interaction">
    <interactant intactId="EBI-2841031">
        <id>Q99941</id>
    </interactant>
    <interactant intactId="EBI-852157">
        <id>P18850</id>
        <label>ATF6</label>
    </interactant>
    <organismsDiffer>false</organismsDiffer>
    <experiments>2</experiments>
</comment>
<comment type="interaction">
    <interactant intactId="EBI-2841031">
        <id>Q99941</id>
    </interactant>
    <interactant intactId="EBI-6942961">
        <id>P17861</id>
        <label>XBP1</label>
    </interactant>
    <organismsDiffer>false</organismsDiffer>
    <experiments>2</experiments>
</comment>
<comment type="interaction">
    <interactant intactId="EBI-2841031">
        <id>Q99941</id>
    </interactant>
    <interactant intactId="EBI-8763498">
        <id>PRO_0000037575</id>
        <dbReference type="UniProtKB" id="P27958"/>
    </interactant>
    <organismsDiffer>true</organismsDiffer>
    <experiments>5</experiments>
</comment>
<comment type="subcellular location">
    <subcellularLocation>
        <location evidence="5">Endoplasmic reticulum membrane</location>
        <topology evidence="2">Single-pass type II membrane protein</topology>
    </subcellularLocation>
</comment>
<comment type="subcellular location">
    <molecule>Processed cyclic AMP-dependent transcription factor ATF-6 beta</molecule>
    <subcellularLocation>
        <location evidence="5">Nucleus</location>
    </subcellularLocation>
    <text evidence="5">Under ER stress the cleaved N-terminal cytoplasmic domain translocates into the nucleus.</text>
</comment>
<comment type="alternative products">
    <event type="alternative splicing"/>
    <isoform>
        <id>Q99941-1</id>
        <name>2</name>
        <sequence type="displayed"/>
    </isoform>
    <isoform>
        <id>Q99941-2</id>
        <name>1</name>
        <sequence type="described" ref="VSP_000593"/>
    </isoform>
</comment>
<comment type="tissue specificity">
    <text evidence="5">Ubiquitous.</text>
</comment>
<comment type="domain">
    <text evidence="5">The basic domain functions as a nuclear localization signal.</text>
</comment>
<comment type="domain">
    <text evidence="5">The basic leucine-zipper domain is sufficient for association with the NF-Y trimer and binding to ERSE.</text>
</comment>
<comment type="PTM">
    <text evidence="5">N-glycosylated.</text>
</comment>
<comment type="PTM">
    <text evidence="8">During unfolded protein response, a fragment of approximately 60 kDa containing the cytoplasmic transcription factor domain is released by proteolysis. The cleavage is probably performed sequentially by site-1 (MBTPS1, S1P) and site-2 (MBTPS2, S2P) proteases.</text>
</comment>
<comment type="similarity">
    <text evidence="7">Belongs to the bZIP family. ATF subfamily.</text>
</comment>
<comment type="sequence caution" evidence="7">
    <conflict type="frameshift">
        <sequence resource="EMBL-CDS" id="AAC50888"/>
    </conflict>
</comment>
<comment type="sequence caution" evidence="7">
    <conflict type="frameshift">
        <sequence resource="EMBL-CDS" id="AAG14898"/>
    </conflict>
</comment>
<feature type="initiator methionine" description="Removed" evidence="9 10">
    <location>
        <position position="1"/>
    </location>
</feature>
<feature type="chain" id="PRO_0000076590" description="Cyclic AMP-dependent transcription factor ATF-6 beta">
    <location>
        <begin position="2"/>
        <end position="703"/>
    </location>
</feature>
<feature type="chain" id="PRO_0000296201" description="Processed cyclic AMP-dependent transcription factor ATF-6 beta">
    <location>
        <begin position="2"/>
        <end status="unknown"/>
    </location>
</feature>
<feature type="topological domain" description="Cytoplasmic" evidence="2">
    <location>
        <begin position="2"/>
        <end position="396"/>
    </location>
</feature>
<feature type="transmembrane region" description="Helical; Signal-anchor for type II membrane protein" evidence="2">
    <location>
        <begin position="397"/>
        <end position="417"/>
    </location>
</feature>
<feature type="topological domain" description="Lumenal" evidence="2">
    <location>
        <begin position="418"/>
        <end position="703"/>
    </location>
</feature>
<feature type="domain" description="bZIP" evidence="3">
    <location>
        <begin position="325"/>
        <end position="388"/>
    </location>
</feature>
<feature type="region of interest" description="Transcription activation">
    <location>
        <begin position="2"/>
        <end position="86"/>
    </location>
</feature>
<feature type="region of interest" description="Disordered" evidence="4">
    <location>
        <begin position="87"/>
        <end position="114"/>
    </location>
</feature>
<feature type="region of interest" description="Disordered" evidence="4">
    <location>
        <begin position="229"/>
        <end position="248"/>
    </location>
</feature>
<feature type="region of interest" description="Disordered" evidence="4">
    <location>
        <begin position="293"/>
        <end position="317"/>
    </location>
</feature>
<feature type="region of interest" description="Basic motif" evidence="3">
    <location>
        <begin position="327"/>
        <end position="347"/>
    </location>
</feature>
<feature type="region of interest" description="Leucine-zipper" evidence="3">
    <location>
        <begin position="350"/>
        <end position="357"/>
    </location>
</feature>
<feature type="region of interest" description="Disordered" evidence="4">
    <location>
        <begin position="447"/>
        <end position="479"/>
    </location>
</feature>
<feature type="region of interest" description="Disordered" evidence="4">
    <location>
        <begin position="521"/>
        <end position="565"/>
    </location>
</feature>
<feature type="region of interest" description="Disordered" evidence="4">
    <location>
        <begin position="660"/>
        <end position="703"/>
    </location>
</feature>
<feature type="compositionally biased region" description="Low complexity" evidence="4">
    <location>
        <begin position="89"/>
        <end position="114"/>
    </location>
</feature>
<feature type="compositionally biased region" description="Basic residues" evidence="4">
    <location>
        <begin position="522"/>
        <end position="531"/>
    </location>
</feature>
<feature type="compositionally biased region" description="Polar residues" evidence="4">
    <location>
        <begin position="660"/>
        <end position="676"/>
    </location>
</feature>
<feature type="compositionally biased region" description="Low complexity" evidence="4">
    <location>
        <begin position="685"/>
        <end position="696"/>
    </location>
</feature>
<feature type="site" description="Important for cleavage by MBTPS2" evidence="1">
    <location>
        <position position="410"/>
    </location>
</feature>
<feature type="site" description="Important for cleavage by MBTPS2" evidence="1">
    <location>
        <position position="413"/>
    </location>
</feature>
<feature type="site" description="Cleavage; by MBTPS1" evidence="1">
    <location>
        <begin position="440"/>
        <end position="441"/>
    </location>
</feature>
<feature type="modified residue" description="N-acetylalanine" evidence="9 10">
    <location>
        <position position="2"/>
    </location>
</feature>
<feature type="glycosylation site" description="N-linked (GlcNAc...) asparagine" evidence="2">
    <location>
        <position position="476"/>
    </location>
</feature>
<feature type="glycosylation site" description="N-linked (GlcNAc...) asparagine" evidence="2">
    <location>
        <position position="505"/>
    </location>
</feature>
<feature type="glycosylation site" description="N-linked (GlcNAc...) asparagine" evidence="2">
    <location>
        <position position="610"/>
    </location>
</feature>
<feature type="glycosylation site" description="N-linked (GlcNAc...) asparagine" evidence="2">
    <location>
        <position position="627"/>
    </location>
</feature>
<feature type="glycosylation site" description="N-linked (GlcNAc...) asparagine" evidence="2">
    <location>
        <position position="676"/>
    </location>
</feature>
<feature type="splice variant" id="VSP_000593" description="In isoform 1." evidence="6">
    <original>GLQN</original>
    <variation>D</variation>
    <location>
        <begin position="28"/>
        <end position="31"/>
    </location>
</feature>
<feature type="sequence conflict" description="In Ref. 2; CAA66664." evidence="7" ref="2">
    <original>E</original>
    <variation>D</variation>
    <location>
        <position position="3"/>
    </location>
</feature>
<feature type="sequence conflict" description="In Ref. 2; CAA66664." evidence="7" ref="2">
    <original>QQ</original>
    <variation>HE</variation>
    <location>
        <begin position="329"/>
        <end position="330"/>
    </location>
</feature>
<feature type="sequence conflict" description="In Ref. 6; AAC50888." evidence="7" ref="6">
    <original>V</original>
    <variation>D</variation>
    <location>
        <position position="520"/>
    </location>
</feature>
<feature type="sequence conflict" description="In Ref. 1; AAA97438." evidence="7" ref="1">
    <original>D</original>
    <variation>G</variation>
    <location>
        <position position="600"/>
    </location>
</feature>
<organism>
    <name type="scientific">Homo sapiens</name>
    <name type="common">Human</name>
    <dbReference type="NCBI Taxonomy" id="9606"/>
    <lineage>
        <taxon>Eukaryota</taxon>
        <taxon>Metazoa</taxon>
        <taxon>Chordata</taxon>
        <taxon>Craniata</taxon>
        <taxon>Vertebrata</taxon>
        <taxon>Euteleostomi</taxon>
        <taxon>Mammalia</taxon>
        <taxon>Eutheria</taxon>
        <taxon>Euarchontoglires</taxon>
        <taxon>Primates</taxon>
        <taxon>Haplorrhini</taxon>
        <taxon>Catarrhini</taxon>
        <taxon>Hominidae</taxon>
        <taxon>Homo</taxon>
    </lineage>
</organism>
<accession>Q99941</accession>
<accession>B0UYX6</accession>
<accession>Q13269</accession>
<accession>Q14343</accession>
<accession>Q14345</accession>
<accession>Q5SSW7</accession>
<accession>Q99635</accession>
<accession>Q99637</accession>
<accession>Q9H3V9</accession>
<accession>Q9H3W1</accession>
<accession>Q9NPL0</accession>
<sequence length="703" mass="76709">MAELMLLSEIADPTRFFTDNLLSPEDWGLQNSTLYSGLDEVAEEQTQLFRCPEQDVPFDGSSLDVGMDVSPSEPPWELLPIFPDLQVKSEPSSPCSSSSLSSESSRLSTEPSSEALGVGEVLHVKTESLAPPLCLLGDDPTSSFETVQINVIPTSDDSSDVQTKIEPVSPCSSVNSEASLLSADSSSQAFIGEEVLEVKTESLSPSGCLLWDVPAPSLGAVQISMGPSLDGSSGKALPTRKPPLQPKPVVLTTVPMPSRAVPPSTTVLLQSLVQPPPVSPVVLIQGAIRVQPEGPAPSLPRPERKSIVPAPMPGNSCPPEVDAKLLKRQQRMIKNRESACQSRRKKKEYLQGLEARLQAVLADNQQLRRENAALRRRLEALLAENSELKLGSGNRKVVCIMVFLLFIAFNFGPVSISEPPSAPISPRMNKGEPQPRRHLLGFSEQEPVQGVEPLQGSSQGPKEPQPSPTDQPSFSNLTAFPGGAKELLLRDLDQLFLSSDCRHFNRTESLRLADELSGWVQRHQRGRRKIPQRAQERQKSQPRKKSPPVKAVPIQPPGPPERDSVGQLQLYRHPDRSQPAFLDAIDRREDTFYVVSFRRDHLLLPAISHNKTSRPKMSLVMPAMAPNETLSGRGAPGDYEEMMQIECEVMDTRVIHIKTSTVPPSLRKQPSPTPGNATGGPLPVSAASQAHQASHQPLYLNHP</sequence>
<dbReference type="EMBL" id="U31903">
    <property type="protein sequence ID" value="AAA97438.1"/>
    <property type="molecule type" value="mRNA"/>
</dbReference>
<dbReference type="EMBL" id="X98053">
    <property type="protein sequence ID" value="CAA66663.1"/>
    <property type="molecule type" value="Genomic_DNA"/>
</dbReference>
<dbReference type="EMBL" id="X98054">
    <property type="protein sequence ID" value="CAA66664.1"/>
    <property type="molecule type" value="mRNA"/>
</dbReference>
<dbReference type="EMBL" id="U89337">
    <property type="protein sequence ID" value="AAB47487.1"/>
    <property type="molecule type" value="Genomic_DNA"/>
</dbReference>
<dbReference type="EMBL" id="AL049547">
    <property type="protein sequence ID" value="CAB89295.1"/>
    <property type="molecule type" value="Genomic_DNA"/>
</dbReference>
<dbReference type="EMBL" id="AL662828">
    <property type="status" value="NOT_ANNOTATED_CDS"/>
    <property type="molecule type" value="Genomic_DNA"/>
</dbReference>
<dbReference type="EMBL" id="AL662884">
    <property type="status" value="NOT_ANNOTATED_CDS"/>
    <property type="molecule type" value="Genomic_DNA"/>
</dbReference>
<dbReference type="EMBL" id="CR753803">
    <property type="status" value="NOT_ANNOTATED_CDS"/>
    <property type="molecule type" value="Genomic_DNA"/>
</dbReference>
<dbReference type="EMBL" id="CR925796">
    <property type="status" value="NOT_ANNOTATED_CDS"/>
    <property type="molecule type" value="Genomic_DNA"/>
</dbReference>
<dbReference type="EMBL" id="CH471081">
    <property type="protein sequence ID" value="EAX03581.1"/>
    <property type="molecule type" value="Genomic_DNA"/>
</dbReference>
<dbReference type="EMBL" id="CH471081">
    <property type="protein sequence ID" value="EAX03583.1"/>
    <property type="molecule type" value="Genomic_DNA"/>
</dbReference>
<dbReference type="EMBL" id="U52694">
    <property type="protein sequence ID" value="AAG14900.1"/>
    <property type="molecule type" value="Genomic_DNA"/>
</dbReference>
<dbReference type="EMBL" id="U52696">
    <property type="protein sequence ID" value="AAC50888.1"/>
    <property type="status" value="ALT_FRAME"/>
    <property type="molecule type" value="mRNA"/>
</dbReference>
<dbReference type="EMBL" id="U52693">
    <property type="protein sequence ID" value="AAG14898.1"/>
    <property type="status" value="ALT_FRAME"/>
    <property type="molecule type" value="Genomic_DNA"/>
</dbReference>
<dbReference type="EMBL" id="U52701">
    <property type="protein sequence ID" value="AAC50883.1"/>
    <property type="status" value="ALT_SEQ"/>
    <property type="molecule type" value="mRNA"/>
</dbReference>
<dbReference type="CCDS" id="CCDS4737.1">
    <molecule id="Q99941-1"/>
</dbReference>
<dbReference type="CCDS" id="CCDS47408.1">
    <molecule id="Q99941-2"/>
</dbReference>
<dbReference type="RefSeq" id="NP_001129625.1">
    <molecule id="Q99941-2"/>
    <property type="nucleotide sequence ID" value="NM_001136153.2"/>
</dbReference>
<dbReference type="RefSeq" id="NP_004372.3">
    <molecule id="Q99941-1"/>
    <property type="nucleotide sequence ID" value="NM_004381.4"/>
</dbReference>
<dbReference type="SMR" id="Q99941"/>
<dbReference type="BioGRID" id="107778">
    <property type="interactions" value="75"/>
</dbReference>
<dbReference type="ComplexPortal" id="CPX-6595">
    <property type="entry name" value="bZIP transcription factor complex, ATF6-ATF6B"/>
</dbReference>
<dbReference type="ComplexPortal" id="CPX-6596">
    <property type="entry name" value="bZIP transcription factor complex, ATF6B-ATF6B"/>
</dbReference>
<dbReference type="ComplexPortal" id="CPX-6600">
    <property type="entry name" value="bZIP transcription factor complex, ATF6B-XBP1"/>
</dbReference>
<dbReference type="ComplexPortal" id="CPX-6601">
    <property type="entry name" value="bZIP transcription factor complex, ATF6B-CREBZF"/>
</dbReference>
<dbReference type="FunCoup" id="Q99941">
    <property type="interactions" value="2367"/>
</dbReference>
<dbReference type="IntAct" id="Q99941">
    <property type="interactions" value="39"/>
</dbReference>
<dbReference type="STRING" id="9606.ENSP00000364349"/>
<dbReference type="GlyCosmos" id="Q99941">
    <property type="glycosylation" value="6 sites, 1 glycan"/>
</dbReference>
<dbReference type="GlyGen" id="Q99941">
    <property type="glycosylation" value="9 sites, 4 N-linked glycans (5 sites), 2 O-linked glycans (2 sites)"/>
</dbReference>
<dbReference type="iPTMnet" id="Q99941"/>
<dbReference type="PhosphoSitePlus" id="Q99941"/>
<dbReference type="BioMuta" id="ATF6B"/>
<dbReference type="DMDM" id="20137431"/>
<dbReference type="jPOST" id="Q99941"/>
<dbReference type="MassIVE" id="Q99941"/>
<dbReference type="PaxDb" id="9606-ENSP00000364349"/>
<dbReference type="PeptideAtlas" id="Q99941"/>
<dbReference type="ProteomicsDB" id="78531">
    <molecule id="Q99941-1"/>
</dbReference>
<dbReference type="ProteomicsDB" id="78532">
    <molecule id="Q99941-2"/>
</dbReference>
<dbReference type="Pumba" id="Q99941"/>
<dbReference type="Antibodypedia" id="49313">
    <property type="antibodies" value="213 antibodies from 29 providers"/>
</dbReference>
<dbReference type="Antibodypedia" id="7841">
    <property type="antibodies" value="12 antibodies from 5 providers"/>
</dbReference>
<dbReference type="DNASU" id="1388"/>
<dbReference type="Ensembl" id="ENST00000293709.10">
    <molecule id="Q99941-1"/>
    <property type="protein sequence ID" value="ENSP00000293709.6"/>
    <property type="gene ID" value="ENSG00000168468.12"/>
</dbReference>
<dbReference type="Ensembl" id="ENST00000375201.8">
    <molecule id="Q99941-2"/>
    <property type="protein sequence ID" value="ENSP00000364347.4"/>
    <property type="gene ID" value="ENSG00000213676.13"/>
</dbReference>
<dbReference type="Ensembl" id="ENST00000375203.8">
    <molecule id="Q99941-1"/>
    <property type="protein sequence ID" value="ENSP00000364349.3"/>
    <property type="gene ID" value="ENSG00000213676.13"/>
</dbReference>
<dbReference type="Ensembl" id="ENST00000383156.8">
    <molecule id="Q99941-2"/>
    <property type="protein sequence ID" value="ENSP00000372642.4"/>
    <property type="gene ID" value="ENSG00000168468.12"/>
</dbReference>
<dbReference type="Ensembl" id="ENST00000425571.6">
    <molecule id="Q99941-1"/>
    <property type="protein sequence ID" value="ENSP00000404814.2"/>
    <property type="gene ID" value="ENSG00000228628.8"/>
</dbReference>
<dbReference type="Ensembl" id="ENST00000427136.6">
    <molecule id="Q99941-1"/>
    <property type="protein sequence ID" value="ENSP00000404725.2"/>
    <property type="gene ID" value="ENSG00000234539.9"/>
</dbReference>
<dbReference type="Ensembl" id="ENST00000435768.6">
    <molecule id="Q99941-2"/>
    <property type="protein sequence ID" value="ENSP00000399764.2"/>
    <property type="gene ID" value="ENSG00000228628.8"/>
</dbReference>
<dbReference type="Ensembl" id="ENST00000439240.6">
    <molecule id="Q99941-2"/>
    <property type="protein sequence ID" value="ENSP00000391131.2"/>
    <property type="gene ID" value="ENSG00000234539.9"/>
</dbReference>
<dbReference type="GeneID" id="1388"/>
<dbReference type="KEGG" id="hsa:1388"/>
<dbReference type="MANE-Select" id="ENST00000375203.8">
    <property type="protein sequence ID" value="ENSP00000364349.3"/>
    <property type="RefSeq nucleotide sequence ID" value="NM_004381.5"/>
    <property type="RefSeq protein sequence ID" value="NP_004372.3"/>
</dbReference>
<dbReference type="UCSC" id="uc003nzn.4">
    <molecule id="Q99941-1"/>
    <property type="organism name" value="human"/>
</dbReference>
<dbReference type="AGR" id="HGNC:2349"/>
<dbReference type="CTD" id="1388"/>
<dbReference type="DisGeNET" id="1388"/>
<dbReference type="GeneCards" id="ATF6B"/>
<dbReference type="HGNC" id="HGNC:2349">
    <property type="gene designation" value="ATF6B"/>
</dbReference>
<dbReference type="HPA" id="ENSG00000213676">
    <property type="expression patterns" value="Low tissue specificity"/>
</dbReference>
<dbReference type="MIM" id="600984">
    <property type="type" value="gene"/>
</dbReference>
<dbReference type="neXtProt" id="NX_Q99941"/>
<dbReference type="OpenTargets" id="ENSG00000213676"/>
<dbReference type="PharmGKB" id="PA164716250"/>
<dbReference type="VEuPathDB" id="HostDB:ENSG00000213676"/>
<dbReference type="eggNOG" id="KOG4343">
    <property type="taxonomic scope" value="Eukaryota"/>
</dbReference>
<dbReference type="GeneTree" id="ENSGT00940000160798"/>
<dbReference type="HOGENOM" id="CLU_026136_0_0_1"/>
<dbReference type="InParanoid" id="Q99941"/>
<dbReference type="OMA" id="SWPQRHL"/>
<dbReference type="OrthoDB" id="644067at2759"/>
<dbReference type="PAN-GO" id="Q99941">
    <property type="GO annotations" value="4 GO annotations based on evolutionary models"/>
</dbReference>
<dbReference type="PhylomeDB" id="Q99941"/>
<dbReference type="TreeFam" id="TF316079"/>
<dbReference type="PathwayCommons" id="Q99941"/>
<dbReference type="Reactome" id="R-HSA-8874177">
    <property type="pathway name" value="ATF6B (ATF6-beta) activates chaperones"/>
</dbReference>
<dbReference type="SignaLink" id="Q99941"/>
<dbReference type="SIGNOR" id="Q99941"/>
<dbReference type="BioGRID-ORCS" id="1388">
    <property type="hits" value="22 hits in 1184 CRISPR screens"/>
</dbReference>
<dbReference type="ChiTaRS" id="ATF6B">
    <property type="organism name" value="human"/>
</dbReference>
<dbReference type="GeneWiki" id="CREBL1"/>
<dbReference type="GenomeRNAi" id="1388"/>
<dbReference type="Pharos" id="Q99941">
    <property type="development level" value="Tbio"/>
</dbReference>
<dbReference type="PRO" id="PR:Q99941"/>
<dbReference type="Proteomes" id="UP000005640">
    <property type="component" value="Chromosome 6"/>
</dbReference>
<dbReference type="RNAct" id="Q99941">
    <property type="molecule type" value="protein"/>
</dbReference>
<dbReference type="Bgee" id="ENSG00000168468">
    <property type="expression patterns" value="Expressed in thyroid gland"/>
</dbReference>
<dbReference type="ExpressionAtlas" id="Q99941">
    <property type="expression patterns" value="baseline and differential"/>
</dbReference>
<dbReference type="GO" id="GO:0000785">
    <property type="term" value="C:chromatin"/>
    <property type="evidence" value="ECO:0000247"/>
    <property type="project" value="NTNU_SB"/>
</dbReference>
<dbReference type="GO" id="GO:0005829">
    <property type="term" value="C:cytosol"/>
    <property type="evidence" value="ECO:0000304"/>
    <property type="project" value="Reactome"/>
</dbReference>
<dbReference type="GO" id="GO:0005789">
    <property type="term" value="C:endoplasmic reticulum membrane"/>
    <property type="evidence" value="ECO:0000314"/>
    <property type="project" value="ParkinsonsUK-UCL"/>
</dbReference>
<dbReference type="GO" id="GO:0005794">
    <property type="term" value="C:Golgi apparatus"/>
    <property type="evidence" value="ECO:0000304"/>
    <property type="project" value="ParkinsonsUK-UCL"/>
</dbReference>
<dbReference type="GO" id="GO:0000139">
    <property type="term" value="C:Golgi membrane"/>
    <property type="evidence" value="ECO:0000304"/>
    <property type="project" value="Reactome"/>
</dbReference>
<dbReference type="GO" id="GO:0005730">
    <property type="term" value="C:nucleolus"/>
    <property type="evidence" value="ECO:0000314"/>
    <property type="project" value="HPA"/>
</dbReference>
<dbReference type="GO" id="GO:0005654">
    <property type="term" value="C:nucleoplasm"/>
    <property type="evidence" value="ECO:0000314"/>
    <property type="project" value="HPA"/>
</dbReference>
<dbReference type="GO" id="GO:0005634">
    <property type="term" value="C:nucleus"/>
    <property type="evidence" value="ECO:0000314"/>
    <property type="project" value="ParkinsonsUK-UCL"/>
</dbReference>
<dbReference type="GO" id="GO:0032993">
    <property type="term" value="C:protein-DNA complex"/>
    <property type="evidence" value="ECO:0000314"/>
    <property type="project" value="ParkinsonsUK-UCL"/>
</dbReference>
<dbReference type="GO" id="GO:0090575">
    <property type="term" value="C:RNA polymerase II transcription regulator complex"/>
    <property type="evidence" value="ECO:0000314"/>
    <property type="project" value="NTNU_SB"/>
</dbReference>
<dbReference type="GO" id="GO:0003700">
    <property type="term" value="F:DNA-binding transcription factor activity"/>
    <property type="evidence" value="ECO:0000314"/>
    <property type="project" value="ParkinsonsUK-UCL"/>
</dbReference>
<dbReference type="GO" id="GO:0000981">
    <property type="term" value="F:DNA-binding transcription factor activity, RNA polymerase II-specific"/>
    <property type="evidence" value="ECO:0000247"/>
    <property type="project" value="NTNU_SB"/>
</dbReference>
<dbReference type="GO" id="GO:1990837">
    <property type="term" value="F:sequence-specific double-stranded DNA binding"/>
    <property type="evidence" value="ECO:0000314"/>
    <property type="project" value="ARUK-UCL"/>
</dbReference>
<dbReference type="GO" id="GO:0000976">
    <property type="term" value="F:transcription cis-regulatory region binding"/>
    <property type="evidence" value="ECO:0000314"/>
    <property type="project" value="ParkinsonsUK-UCL"/>
</dbReference>
<dbReference type="GO" id="GO:0036500">
    <property type="term" value="P:ATF6-mediated unfolded protein response"/>
    <property type="evidence" value="ECO:0000304"/>
    <property type="project" value="ParkinsonsUK-UCL"/>
</dbReference>
<dbReference type="GO" id="GO:0030968">
    <property type="term" value="P:endoplasmic reticulum unfolded protein response"/>
    <property type="evidence" value="ECO:0000318"/>
    <property type="project" value="GO_Central"/>
</dbReference>
<dbReference type="GO" id="GO:1903892">
    <property type="term" value="P:negative regulation of ATF6-mediated unfolded protein response"/>
    <property type="evidence" value="ECO:0000314"/>
    <property type="project" value="UniProtKB"/>
</dbReference>
<dbReference type="GO" id="GO:0045944">
    <property type="term" value="P:positive regulation of transcription by RNA polymerase II"/>
    <property type="evidence" value="ECO:0000314"/>
    <property type="project" value="ParkinsonsUK-UCL"/>
</dbReference>
<dbReference type="GO" id="GO:0006357">
    <property type="term" value="P:regulation of transcription by RNA polymerase II"/>
    <property type="evidence" value="ECO:0000318"/>
    <property type="project" value="GO_Central"/>
</dbReference>
<dbReference type="GO" id="GO:0034976">
    <property type="term" value="P:response to endoplasmic reticulum stress"/>
    <property type="evidence" value="ECO:0000314"/>
    <property type="project" value="ParkinsonsUK-UCL"/>
</dbReference>
<dbReference type="GO" id="GO:0007165">
    <property type="term" value="P:signal transduction"/>
    <property type="evidence" value="ECO:0000304"/>
    <property type="project" value="ProtInc"/>
</dbReference>
<dbReference type="CDD" id="cd14700">
    <property type="entry name" value="bZIP_ATF6"/>
    <property type="match status" value="1"/>
</dbReference>
<dbReference type="FunFam" id="1.20.5.170:FF:000041">
    <property type="entry name" value="Cyclic AMP-dependent transcription factor ATF-6 beta"/>
    <property type="match status" value="1"/>
</dbReference>
<dbReference type="Gene3D" id="1.20.5.170">
    <property type="match status" value="1"/>
</dbReference>
<dbReference type="InterPro" id="IPR051882">
    <property type="entry name" value="ATF_bZIP_TF"/>
</dbReference>
<dbReference type="InterPro" id="IPR004827">
    <property type="entry name" value="bZIP"/>
</dbReference>
<dbReference type="InterPro" id="IPR046347">
    <property type="entry name" value="bZIP_sf"/>
</dbReference>
<dbReference type="PANTHER" id="PTHR46164">
    <property type="entry name" value="ATF6, ISOFORM C"/>
    <property type="match status" value="1"/>
</dbReference>
<dbReference type="PANTHER" id="PTHR46164:SF2">
    <property type="entry name" value="CYCLIC AMP-DEPENDENT TRANSCRIPTION FACTOR ATF-6 BETA"/>
    <property type="match status" value="1"/>
</dbReference>
<dbReference type="Pfam" id="PF00170">
    <property type="entry name" value="bZIP_1"/>
    <property type="match status" value="1"/>
</dbReference>
<dbReference type="SMART" id="SM00338">
    <property type="entry name" value="BRLZ"/>
    <property type="match status" value="1"/>
</dbReference>
<dbReference type="SUPFAM" id="SSF57959">
    <property type="entry name" value="Leucine zipper domain"/>
    <property type="match status" value="1"/>
</dbReference>
<dbReference type="PROSITE" id="PS50217">
    <property type="entry name" value="BZIP"/>
    <property type="match status" value="1"/>
</dbReference>
<dbReference type="PROSITE" id="PS00036">
    <property type="entry name" value="BZIP_BASIC"/>
    <property type="match status" value="1"/>
</dbReference>
<name>ATF6B_HUMAN</name>